<reference key="1">
    <citation type="journal article" date="2008" name="ISME J.">
        <title>Comparative genomics of two ecotypes of the marine planktonic copiotroph Alteromonas macleodii suggests alternative lifestyles associated with different kinds of particulate organic matter.</title>
        <authorList>
            <person name="Ivars-Martinez E."/>
            <person name="Martin-Cuadrado A.-B."/>
            <person name="D'Auria G."/>
            <person name="Mira A."/>
            <person name="Ferriera S."/>
            <person name="Johnson J."/>
            <person name="Friedman R."/>
            <person name="Rodriguez-Valera F."/>
        </authorList>
    </citation>
    <scope>NUCLEOTIDE SEQUENCE [LARGE SCALE GENOMIC DNA]</scope>
    <source>
        <strain>DSM 17117 / CIP 110805 / LMG 28347 / Deep ecotype</strain>
    </source>
</reference>
<name>TRPB_ALTMD</name>
<keyword id="KW-0028">Amino-acid biosynthesis</keyword>
<keyword id="KW-0057">Aromatic amino acid biosynthesis</keyword>
<keyword id="KW-0456">Lyase</keyword>
<keyword id="KW-0663">Pyridoxal phosphate</keyword>
<keyword id="KW-0822">Tryptophan biosynthesis</keyword>
<proteinExistence type="inferred from homology"/>
<organism>
    <name type="scientific">Alteromonas mediterranea (strain DSM 17117 / CIP 110805 / LMG 28347 / Deep ecotype)</name>
    <dbReference type="NCBI Taxonomy" id="1774373"/>
    <lineage>
        <taxon>Bacteria</taxon>
        <taxon>Pseudomonadati</taxon>
        <taxon>Pseudomonadota</taxon>
        <taxon>Gammaproteobacteria</taxon>
        <taxon>Alteromonadales</taxon>
        <taxon>Alteromonadaceae</taxon>
        <taxon>Alteromonas/Salinimonas group</taxon>
        <taxon>Alteromonas</taxon>
    </lineage>
</organism>
<feature type="chain" id="PRO_1000095774" description="Tryptophan synthase beta chain">
    <location>
        <begin position="1"/>
        <end position="393"/>
    </location>
</feature>
<feature type="modified residue" description="N6-(pyridoxal phosphate)lysine" evidence="1">
    <location>
        <position position="86"/>
    </location>
</feature>
<protein>
    <recommendedName>
        <fullName evidence="1">Tryptophan synthase beta chain</fullName>
        <ecNumber evidence="1">4.2.1.20</ecNumber>
    </recommendedName>
</protein>
<gene>
    <name evidence="1" type="primary">trpB</name>
    <name type="ordered locus">MADE_1006880</name>
</gene>
<evidence type="ECO:0000255" key="1">
    <source>
        <dbReference type="HAMAP-Rule" id="MF_00133"/>
    </source>
</evidence>
<comment type="function">
    <text evidence="1">The beta subunit is responsible for the synthesis of L-tryptophan from indole and L-serine.</text>
</comment>
<comment type="catalytic activity">
    <reaction evidence="1">
        <text>(1S,2R)-1-C-(indol-3-yl)glycerol 3-phosphate + L-serine = D-glyceraldehyde 3-phosphate + L-tryptophan + H2O</text>
        <dbReference type="Rhea" id="RHEA:10532"/>
        <dbReference type="ChEBI" id="CHEBI:15377"/>
        <dbReference type="ChEBI" id="CHEBI:33384"/>
        <dbReference type="ChEBI" id="CHEBI:57912"/>
        <dbReference type="ChEBI" id="CHEBI:58866"/>
        <dbReference type="ChEBI" id="CHEBI:59776"/>
        <dbReference type="EC" id="4.2.1.20"/>
    </reaction>
</comment>
<comment type="cofactor">
    <cofactor evidence="1">
        <name>pyridoxal 5'-phosphate</name>
        <dbReference type="ChEBI" id="CHEBI:597326"/>
    </cofactor>
</comment>
<comment type="pathway">
    <text evidence="1">Amino-acid biosynthesis; L-tryptophan biosynthesis; L-tryptophan from chorismate: step 5/5.</text>
</comment>
<comment type="subunit">
    <text evidence="1">Tetramer of two alpha and two beta chains.</text>
</comment>
<comment type="similarity">
    <text evidence="1">Belongs to the TrpB family.</text>
</comment>
<accession>B4S1J4</accession>
<accession>F2G5U7</accession>
<dbReference type="EC" id="4.2.1.20" evidence="1"/>
<dbReference type="EMBL" id="CP001103">
    <property type="protein sequence ID" value="AEA97518.1"/>
    <property type="molecule type" value="Genomic_DNA"/>
</dbReference>
<dbReference type="RefSeq" id="WP_012517860.1">
    <property type="nucleotide sequence ID" value="NC_011138.3"/>
</dbReference>
<dbReference type="SMR" id="B4S1J4"/>
<dbReference type="GeneID" id="56341863"/>
<dbReference type="KEGG" id="amc:MADE_1006880"/>
<dbReference type="HOGENOM" id="CLU_016734_3_1_6"/>
<dbReference type="UniPathway" id="UPA00035">
    <property type="reaction ID" value="UER00044"/>
</dbReference>
<dbReference type="Proteomes" id="UP000001870">
    <property type="component" value="Chromosome"/>
</dbReference>
<dbReference type="GO" id="GO:0005737">
    <property type="term" value="C:cytoplasm"/>
    <property type="evidence" value="ECO:0007669"/>
    <property type="project" value="TreeGrafter"/>
</dbReference>
<dbReference type="GO" id="GO:0004834">
    <property type="term" value="F:tryptophan synthase activity"/>
    <property type="evidence" value="ECO:0007669"/>
    <property type="project" value="UniProtKB-UniRule"/>
</dbReference>
<dbReference type="CDD" id="cd06446">
    <property type="entry name" value="Trp-synth_B"/>
    <property type="match status" value="1"/>
</dbReference>
<dbReference type="FunFam" id="3.40.50.1100:FF:000001">
    <property type="entry name" value="Tryptophan synthase beta chain"/>
    <property type="match status" value="1"/>
</dbReference>
<dbReference type="FunFam" id="3.40.50.1100:FF:000004">
    <property type="entry name" value="Tryptophan synthase beta chain"/>
    <property type="match status" value="1"/>
</dbReference>
<dbReference type="Gene3D" id="3.40.50.1100">
    <property type="match status" value="2"/>
</dbReference>
<dbReference type="HAMAP" id="MF_00133">
    <property type="entry name" value="Trp_synth_beta"/>
    <property type="match status" value="1"/>
</dbReference>
<dbReference type="InterPro" id="IPR006653">
    <property type="entry name" value="Trp_synth_b_CS"/>
</dbReference>
<dbReference type="InterPro" id="IPR006654">
    <property type="entry name" value="Trp_synth_beta"/>
</dbReference>
<dbReference type="InterPro" id="IPR023026">
    <property type="entry name" value="Trp_synth_beta/beta-like"/>
</dbReference>
<dbReference type="InterPro" id="IPR001926">
    <property type="entry name" value="TrpB-like_PALP"/>
</dbReference>
<dbReference type="InterPro" id="IPR036052">
    <property type="entry name" value="TrpB-like_PALP_sf"/>
</dbReference>
<dbReference type="NCBIfam" id="TIGR00263">
    <property type="entry name" value="trpB"/>
    <property type="match status" value="1"/>
</dbReference>
<dbReference type="PANTHER" id="PTHR48077:SF3">
    <property type="entry name" value="TRYPTOPHAN SYNTHASE"/>
    <property type="match status" value="1"/>
</dbReference>
<dbReference type="PANTHER" id="PTHR48077">
    <property type="entry name" value="TRYPTOPHAN SYNTHASE-RELATED"/>
    <property type="match status" value="1"/>
</dbReference>
<dbReference type="Pfam" id="PF00291">
    <property type="entry name" value="PALP"/>
    <property type="match status" value="1"/>
</dbReference>
<dbReference type="PIRSF" id="PIRSF001413">
    <property type="entry name" value="Trp_syn_beta"/>
    <property type="match status" value="1"/>
</dbReference>
<dbReference type="SUPFAM" id="SSF53686">
    <property type="entry name" value="Tryptophan synthase beta subunit-like PLP-dependent enzymes"/>
    <property type="match status" value="1"/>
</dbReference>
<dbReference type="PROSITE" id="PS00168">
    <property type="entry name" value="TRP_SYNTHASE_BETA"/>
    <property type="match status" value="1"/>
</dbReference>
<sequence length="393" mass="42427">MNQLDTKFGEFGGMYVPELLIPALDQLEKAFLDAKEDPSFNEEFLSLLKDYAGRPTAMTLTRNLVSNPKVKLYLKREDLLHGGAHKTNQVLGQALLTKRMGKKEVIAETGAGQHGVATALACALLGLKARIYMGAKDVERQAPNVFRMKLMGAEVIPVNAGSGTLKDAVNEAMRDWSANYDTAHYLLGTAAGPHPFPTIVREYHRMIGEETRAQIMEKEGRLPDAVVACVGGGSNAIGMFADFIDEPSVRLVGVEPAGKGVHTKEHGATIVTGTKGILHGAYTFIMQDKEGQIEESYSVSAGLDYPAVGPQHAYLHDIGRAEYVAATDEEALNAFQLLARKEGIIPALESSHALAHALNMADEAEEETIIVVNLSGRGDKDLAHVINILGDDL</sequence>